<comment type="sequence caution" evidence="1">
    <conflict type="frameshift">
        <sequence resource="EMBL-CDS" id="AAB62309"/>
    </conflict>
</comment>
<accession>P94475</accession>
<gene>
    <name type="primary">yeaD</name>
    <name type="ordered locus">BSU06340</name>
</gene>
<protein>
    <recommendedName>
        <fullName>Uncharacterized protein YeaD</fullName>
    </recommendedName>
</protein>
<organism>
    <name type="scientific">Bacillus subtilis (strain 168)</name>
    <dbReference type="NCBI Taxonomy" id="224308"/>
    <lineage>
        <taxon>Bacteria</taxon>
        <taxon>Bacillati</taxon>
        <taxon>Bacillota</taxon>
        <taxon>Bacilli</taxon>
        <taxon>Bacillales</taxon>
        <taxon>Bacillaceae</taxon>
        <taxon>Bacillus</taxon>
    </lineage>
</organism>
<sequence length="398" mass="45379">MNKKWQWLVYGWKLIILTLLTAAVFSYAMFQGGFVSWFLFYAFLPFVLYAGLLALYPLRSFQASRQMDKTQLHAGDRLGVTVTLRRKLPFPLMYMVIEDCLPEGIESLNRDGAAAKRLVFPWFKRSMTMSYELARVPRGEHHFHSVRVRTGDVLGLIEKTAFFELDDTLFVYPFYQRFSYQVNERHQEDGVSGSSPIHQHHSSVAASVRNYQPGDRFAALDWKTSARRSQLMTKEFEPSRSKNLFLLMDRFSSDAFEEVVSVTASILHSVLKNGAGAGLASIGKEKNIFPIQEGDQHFKHMLRHLAIAHCDAADPISRYAREELGKPSVRQADQVVVTGQLTEDMLHLAEIGGGRVTVILAKEKDAELSQAENVMIERMMKRQIRVRIMRGGRVSRVV</sequence>
<proteinExistence type="predicted"/>
<dbReference type="EMBL" id="U51115">
    <property type="protein sequence ID" value="AAB62309.1"/>
    <property type="status" value="ALT_FRAME"/>
    <property type="molecule type" value="Genomic_DNA"/>
</dbReference>
<dbReference type="EMBL" id="AL009126">
    <property type="protein sequence ID" value="CAB12453.2"/>
    <property type="molecule type" value="Genomic_DNA"/>
</dbReference>
<dbReference type="PIR" id="D69791">
    <property type="entry name" value="D69791"/>
</dbReference>
<dbReference type="RefSeq" id="NP_388515.2">
    <property type="nucleotide sequence ID" value="NC_000964.3"/>
</dbReference>
<dbReference type="RefSeq" id="WP_003243539.1">
    <property type="nucleotide sequence ID" value="NZ_OZ025638.1"/>
</dbReference>
<dbReference type="FunCoup" id="P94475">
    <property type="interactions" value="215"/>
</dbReference>
<dbReference type="STRING" id="224308.BSU06340"/>
<dbReference type="PaxDb" id="224308-BSU06340"/>
<dbReference type="EnsemblBacteria" id="CAB12453">
    <property type="protein sequence ID" value="CAB12453"/>
    <property type="gene ID" value="BSU_06340"/>
</dbReference>
<dbReference type="GeneID" id="939486"/>
<dbReference type="KEGG" id="bsu:BSU06340"/>
<dbReference type="PATRIC" id="fig|224308.179.peg.688"/>
<dbReference type="eggNOG" id="COG1721">
    <property type="taxonomic scope" value="Bacteria"/>
</dbReference>
<dbReference type="InParanoid" id="P94475"/>
<dbReference type="OrthoDB" id="140416at2"/>
<dbReference type="PhylomeDB" id="P94475"/>
<dbReference type="BioCyc" id="BSUB:BSU06340-MONOMER"/>
<dbReference type="Proteomes" id="UP000001570">
    <property type="component" value="Chromosome"/>
</dbReference>
<dbReference type="InterPro" id="IPR002881">
    <property type="entry name" value="DUF58"/>
</dbReference>
<dbReference type="PANTHER" id="PTHR34351:SF2">
    <property type="entry name" value="DUF58 DOMAIN-CONTAINING PROTEIN"/>
    <property type="match status" value="1"/>
</dbReference>
<dbReference type="PANTHER" id="PTHR34351">
    <property type="entry name" value="SLR1927 PROTEIN-RELATED"/>
    <property type="match status" value="1"/>
</dbReference>
<dbReference type="Pfam" id="PF01882">
    <property type="entry name" value="DUF58"/>
    <property type="match status" value="1"/>
</dbReference>
<feature type="chain" id="PRO_0000049514" description="Uncharacterized protein YeaD">
    <location>
        <begin position="1"/>
        <end position="398"/>
    </location>
</feature>
<feature type="sequence conflict" description="In Ref. 1; AAB62309." evidence="1" ref="1">
    <original>K</original>
    <variation>E</variation>
    <location>
        <position position="87"/>
    </location>
</feature>
<feature type="sequence conflict" description="In Ref. 1; AAB62309." evidence="1" ref="1">
    <original>AA</original>
    <variation>GR</variation>
    <location>
        <begin position="113"/>
        <end position="114"/>
    </location>
</feature>
<reference key="1">
    <citation type="journal article" date="1996" name="Microbiology">
        <title>The 52 degrees-55 degrees segment of the Bacillus subtilis chromosome: a region devoted to purine uptake and metabolism, and containing the genes cotA, gabP and guaA and the pur gene cluster within a 34960 bp nucleotide sequence.</title>
        <authorList>
            <person name="Borriss R."/>
            <person name="Porwollik S."/>
            <person name="Schroeter R."/>
        </authorList>
    </citation>
    <scope>NUCLEOTIDE SEQUENCE [GENOMIC DNA]</scope>
    <source>
        <strain>168</strain>
    </source>
</reference>
<reference key="2">
    <citation type="journal article" date="1997" name="Nature">
        <title>The complete genome sequence of the Gram-positive bacterium Bacillus subtilis.</title>
        <authorList>
            <person name="Kunst F."/>
            <person name="Ogasawara N."/>
            <person name="Moszer I."/>
            <person name="Albertini A.M."/>
            <person name="Alloni G."/>
            <person name="Azevedo V."/>
            <person name="Bertero M.G."/>
            <person name="Bessieres P."/>
            <person name="Bolotin A."/>
            <person name="Borchert S."/>
            <person name="Borriss R."/>
            <person name="Boursier L."/>
            <person name="Brans A."/>
            <person name="Braun M."/>
            <person name="Brignell S.C."/>
            <person name="Bron S."/>
            <person name="Brouillet S."/>
            <person name="Bruschi C.V."/>
            <person name="Caldwell B."/>
            <person name="Capuano V."/>
            <person name="Carter N.M."/>
            <person name="Choi S.-K."/>
            <person name="Codani J.-J."/>
            <person name="Connerton I.F."/>
            <person name="Cummings N.J."/>
            <person name="Daniel R.A."/>
            <person name="Denizot F."/>
            <person name="Devine K.M."/>
            <person name="Duesterhoeft A."/>
            <person name="Ehrlich S.D."/>
            <person name="Emmerson P.T."/>
            <person name="Entian K.-D."/>
            <person name="Errington J."/>
            <person name="Fabret C."/>
            <person name="Ferrari E."/>
            <person name="Foulger D."/>
            <person name="Fritz C."/>
            <person name="Fujita M."/>
            <person name="Fujita Y."/>
            <person name="Fuma S."/>
            <person name="Galizzi A."/>
            <person name="Galleron N."/>
            <person name="Ghim S.-Y."/>
            <person name="Glaser P."/>
            <person name="Goffeau A."/>
            <person name="Golightly E.J."/>
            <person name="Grandi G."/>
            <person name="Guiseppi G."/>
            <person name="Guy B.J."/>
            <person name="Haga K."/>
            <person name="Haiech J."/>
            <person name="Harwood C.R."/>
            <person name="Henaut A."/>
            <person name="Hilbert H."/>
            <person name="Holsappel S."/>
            <person name="Hosono S."/>
            <person name="Hullo M.-F."/>
            <person name="Itaya M."/>
            <person name="Jones L.-M."/>
            <person name="Joris B."/>
            <person name="Karamata D."/>
            <person name="Kasahara Y."/>
            <person name="Klaerr-Blanchard M."/>
            <person name="Klein C."/>
            <person name="Kobayashi Y."/>
            <person name="Koetter P."/>
            <person name="Koningstein G."/>
            <person name="Krogh S."/>
            <person name="Kumano M."/>
            <person name="Kurita K."/>
            <person name="Lapidus A."/>
            <person name="Lardinois S."/>
            <person name="Lauber J."/>
            <person name="Lazarevic V."/>
            <person name="Lee S.-M."/>
            <person name="Levine A."/>
            <person name="Liu H."/>
            <person name="Masuda S."/>
            <person name="Mauel C."/>
            <person name="Medigue C."/>
            <person name="Medina N."/>
            <person name="Mellado R.P."/>
            <person name="Mizuno M."/>
            <person name="Moestl D."/>
            <person name="Nakai S."/>
            <person name="Noback M."/>
            <person name="Noone D."/>
            <person name="O'Reilly M."/>
            <person name="Ogawa K."/>
            <person name="Ogiwara A."/>
            <person name="Oudega B."/>
            <person name="Park S.-H."/>
            <person name="Parro V."/>
            <person name="Pohl T.M."/>
            <person name="Portetelle D."/>
            <person name="Porwollik S."/>
            <person name="Prescott A.M."/>
            <person name="Presecan E."/>
            <person name="Pujic P."/>
            <person name="Purnelle B."/>
            <person name="Rapoport G."/>
            <person name="Rey M."/>
            <person name="Reynolds S."/>
            <person name="Rieger M."/>
            <person name="Rivolta C."/>
            <person name="Rocha E."/>
            <person name="Roche B."/>
            <person name="Rose M."/>
            <person name="Sadaie Y."/>
            <person name="Sato T."/>
            <person name="Scanlan E."/>
            <person name="Schleich S."/>
            <person name="Schroeter R."/>
            <person name="Scoffone F."/>
            <person name="Sekiguchi J."/>
            <person name="Sekowska A."/>
            <person name="Seror S.J."/>
            <person name="Serror P."/>
            <person name="Shin B.-S."/>
            <person name="Soldo B."/>
            <person name="Sorokin A."/>
            <person name="Tacconi E."/>
            <person name="Takagi T."/>
            <person name="Takahashi H."/>
            <person name="Takemaru K."/>
            <person name="Takeuchi M."/>
            <person name="Tamakoshi A."/>
            <person name="Tanaka T."/>
            <person name="Terpstra P."/>
            <person name="Tognoni A."/>
            <person name="Tosato V."/>
            <person name="Uchiyama S."/>
            <person name="Vandenbol M."/>
            <person name="Vannier F."/>
            <person name="Vassarotti A."/>
            <person name="Viari A."/>
            <person name="Wambutt R."/>
            <person name="Wedler E."/>
            <person name="Wedler H."/>
            <person name="Weitzenegger T."/>
            <person name="Winters P."/>
            <person name="Wipat A."/>
            <person name="Yamamoto H."/>
            <person name="Yamane K."/>
            <person name="Yasumoto K."/>
            <person name="Yata K."/>
            <person name="Yoshida K."/>
            <person name="Yoshikawa H.-F."/>
            <person name="Zumstein E."/>
            <person name="Yoshikawa H."/>
            <person name="Danchin A."/>
        </authorList>
    </citation>
    <scope>NUCLEOTIDE SEQUENCE [LARGE SCALE GENOMIC DNA]</scope>
    <source>
        <strain>168</strain>
    </source>
</reference>
<reference key="3">
    <citation type="journal article" date="2009" name="Microbiology">
        <title>From a consortium sequence to a unified sequence: the Bacillus subtilis 168 reference genome a decade later.</title>
        <authorList>
            <person name="Barbe V."/>
            <person name="Cruveiller S."/>
            <person name="Kunst F."/>
            <person name="Lenoble P."/>
            <person name="Meurice G."/>
            <person name="Sekowska A."/>
            <person name="Vallenet D."/>
            <person name="Wang T."/>
            <person name="Moszer I."/>
            <person name="Medigue C."/>
            <person name="Danchin A."/>
        </authorList>
    </citation>
    <scope>SEQUENCE REVISION</scope>
</reference>
<name>YEAD_BACSU</name>
<evidence type="ECO:0000305" key="1"/>
<keyword id="KW-1185">Reference proteome</keyword>